<reference key="1">
    <citation type="journal article" date="2005" name="Nat. Biotechnol.">
        <title>Complete genome sequence of the plant commensal Pseudomonas fluorescens Pf-5.</title>
        <authorList>
            <person name="Paulsen I.T."/>
            <person name="Press C.M."/>
            <person name="Ravel J."/>
            <person name="Kobayashi D.Y."/>
            <person name="Myers G.S.A."/>
            <person name="Mavrodi D.V."/>
            <person name="DeBoy R.T."/>
            <person name="Seshadri R."/>
            <person name="Ren Q."/>
            <person name="Madupu R."/>
            <person name="Dodson R.J."/>
            <person name="Durkin A.S."/>
            <person name="Brinkac L.M."/>
            <person name="Daugherty S.C."/>
            <person name="Sullivan S.A."/>
            <person name="Rosovitz M.J."/>
            <person name="Gwinn M.L."/>
            <person name="Zhou L."/>
            <person name="Schneider D.J."/>
            <person name="Cartinhour S.W."/>
            <person name="Nelson W.C."/>
            <person name="Weidman J."/>
            <person name="Watkins K."/>
            <person name="Tran K."/>
            <person name="Khouri H."/>
            <person name="Pierson E.A."/>
            <person name="Pierson L.S. III"/>
            <person name="Thomashow L.S."/>
            <person name="Loper J.E."/>
        </authorList>
    </citation>
    <scope>NUCLEOTIDE SEQUENCE [LARGE SCALE GENOMIC DNA]</scope>
    <source>
        <strain>ATCC BAA-477 / NRRL B-23932 / Pf-5</strain>
    </source>
</reference>
<organism>
    <name type="scientific">Pseudomonas fluorescens (strain ATCC BAA-477 / NRRL B-23932 / Pf-5)</name>
    <dbReference type="NCBI Taxonomy" id="220664"/>
    <lineage>
        <taxon>Bacteria</taxon>
        <taxon>Pseudomonadati</taxon>
        <taxon>Pseudomonadota</taxon>
        <taxon>Gammaproteobacteria</taxon>
        <taxon>Pseudomonadales</taxon>
        <taxon>Pseudomonadaceae</taxon>
        <taxon>Pseudomonas</taxon>
    </lineage>
</organism>
<keyword id="KW-0687">Ribonucleoprotein</keyword>
<keyword id="KW-0689">Ribosomal protein</keyword>
<evidence type="ECO:0000255" key="1">
    <source>
        <dbReference type="HAMAP-Rule" id="MF_00502"/>
    </source>
</evidence>
<evidence type="ECO:0000305" key="2"/>
<feature type="chain" id="PRO_0000259112" description="Large ribosomal subunit protein bL31B">
    <location>
        <begin position="1"/>
        <end position="89"/>
    </location>
</feature>
<gene>
    <name evidence="1" type="primary">rpmE2</name>
    <name type="ordered locus">PFL_4896</name>
</gene>
<protein>
    <recommendedName>
        <fullName evidence="1">Large ribosomal subunit protein bL31B</fullName>
    </recommendedName>
    <alternativeName>
        <fullName evidence="2">50S ribosomal protein L31 type B</fullName>
    </alternativeName>
</protein>
<dbReference type="EMBL" id="CP000076">
    <property type="protein sequence ID" value="AAY94126.1"/>
    <property type="molecule type" value="Genomic_DNA"/>
</dbReference>
<dbReference type="RefSeq" id="WP_011063150.1">
    <property type="nucleotide sequence ID" value="NC_004129.6"/>
</dbReference>
<dbReference type="SMR" id="Q4K706"/>
<dbReference type="STRING" id="220664.PFL_4896"/>
<dbReference type="KEGG" id="pfl:PFL_4896"/>
<dbReference type="PATRIC" id="fig|220664.5.peg.5013"/>
<dbReference type="eggNOG" id="COG0254">
    <property type="taxonomic scope" value="Bacteria"/>
</dbReference>
<dbReference type="HOGENOM" id="CLU_114306_2_2_6"/>
<dbReference type="Proteomes" id="UP000008540">
    <property type="component" value="Chromosome"/>
</dbReference>
<dbReference type="GO" id="GO:1990904">
    <property type="term" value="C:ribonucleoprotein complex"/>
    <property type="evidence" value="ECO:0007669"/>
    <property type="project" value="UniProtKB-KW"/>
</dbReference>
<dbReference type="GO" id="GO:0005840">
    <property type="term" value="C:ribosome"/>
    <property type="evidence" value="ECO:0007669"/>
    <property type="project" value="UniProtKB-KW"/>
</dbReference>
<dbReference type="GO" id="GO:0003735">
    <property type="term" value="F:structural constituent of ribosome"/>
    <property type="evidence" value="ECO:0007669"/>
    <property type="project" value="InterPro"/>
</dbReference>
<dbReference type="GO" id="GO:0006412">
    <property type="term" value="P:translation"/>
    <property type="evidence" value="ECO:0007669"/>
    <property type="project" value="UniProtKB-UniRule"/>
</dbReference>
<dbReference type="Gene3D" id="4.10.830.30">
    <property type="entry name" value="Ribosomal protein L31"/>
    <property type="match status" value="1"/>
</dbReference>
<dbReference type="HAMAP" id="MF_00502">
    <property type="entry name" value="Ribosomal_bL31_2"/>
    <property type="match status" value="1"/>
</dbReference>
<dbReference type="InterPro" id="IPR034704">
    <property type="entry name" value="Ribosomal_bL28/bL31-like_sf"/>
</dbReference>
<dbReference type="InterPro" id="IPR002150">
    <property type="entry name" value="Ribosomal_bL31"/>
</dbReference>
<dbReference type="InterPro" id="IPR027493">
    <property type="entry name" value="Ribosomal_bL31_B"/>
</dbReference>
<dbReference type="InterPro" id="IPR042105">
    <property type="entry name" value="Ribosomal_bL31_sf"/>
</dbReference>
<dbReference type="NCBIfam" id="TIGR00105">
    <property type="entry name" value="L31"/>
    <property type="match status" value="1"/>
</dbReference>
<dbReference type="NCBIfam" id="NF002462">
    <property type="entry name" value="PRK01678.1"/>
    <property type="match status" value="1"/>
</dbReference>
<dbReference type="PANTHER" id="PTHR33280">
    <property type="entry name" value="50S RIBOSOMAL PROTEIN L31, CHLOROPLASTIC"/>
    <property type="match status" value="1"/>
</dbReference>
<dbReference type="PANTHER" id="PTHR33280:SF1">
    <property type="entry name" value="LARGE RIBOSOMAL SUBUNIT PROTEIN BL31C"/>
    <property type="match status" value="1"/>
</dbReference>
<dbReference type="Pfam" id="PF01197">
    <property type="entry name" value="Ribosomal_L31"/>
    <property type="match status" value="1"/>
</dbReference>
<dbReference type="PRINTS" id="PR01249">
    <property type="entry name" value="RIBOSOMALL31"/>
</dbReference>
<dbReference type="SUPFAM" id="SSF143800">
    <property type="entry name" value="L28p-like"/>
    <property type="match status" value="1"/>
</dbReference>
<dbReference type="PROSITE" id="PS01143">
    <property type="entry name" value="RIBOSOMAL_L31"/>
    <property type="match status" value="1"/>
</dbReference>
<accession>Q4K706</accession>
<comment type="subunit">
    <text evidence="1">Part of the 50S ribosomal subunit.</text>
</comment>
<comment type="similarity">
    <text evidence="1">Belongs to the bacterial ribosomal protein bL31 family. Type B subfamily.</text>
</comment>
<proteinExistence type="inferred from homology"/>
<name>RL31B_PSEF5</name>
<sequence length="89" mass="9747">MKPGIHPDYRTVLFHDTAADVYFLIGSTVDTDRSHTYSDGKTYPYVALDVSSASHPVYTGQQRKTQSEGRIAGFNKRFASFGSGAKAAQ</sequence>